<comment type="function">
    <text evidence="1">Required for accurate and efficient protein synthesis under certain stress conditions. May act as a fidelity factor of the translation reaction, by catalyzing a one-codon backward translocation of tRNAs on improperly translocated ribosomes. Back-translocation proceeds from a post-translocation (POST) complex to a pre-translocation (PRE) complex, thus giving elongation factor G a second chance to translocate the tRNAs correctly. Binds to ribosomes in a GTP-dependent manner.</text>
</comment>
<comment type="catalytic activity">
    <reaction evidence="1">
        <text>GTP + H2O = GDP + phosphate + H(+)</text>
        <dbReference type="Rhea" id="RHEA:19669"/>
        <dbReference type="ChEBI" id="CHEBI:15377"/>
        <dbReference type="ChEBI" id="CHEBI:15378"/>
        <dbReference type="ChEBI" id="CHEBI:37565"/>
        <dbReference type="ChEBI" id="CHEBI:43474"/>
        <dbReference type="ChEBI" id="CHEBI:58189"/>
        <dbReference type="EC" id="3.6.5.n1"/>
    </reaction>
</comment>
<comment type="subcellular location">
    <subcellularLocation>
        <location evidence="1">Cell inner membrane</location>
        <topology evidence="1">Peripheral membrane protein</topology>
        <orientation evidence="1">Cytoplasmic side</orientation>
    </subcellularLocation>
</comment>
<comment type="similarity">
    <text evidence="1">Belongs to the TRAFAC class translation factor GTPase superfamily. Classic translation factor GTPase family. LepA subfamily.</text>
</comment>
<accession>B4SRL3</accession>
<sequence length="602" mass="66534">MSSDSMRNIRNFSIIAHVDHGKSTLADRIIQLCGGLQAREMEAQVLDSNPIERERGITIKAQSVSLPYLAKDGQTYHLNFIDTPGHVDFSYEVSRSLAACEGALLVVDAAQGVEAQSVANCYTAVEQGLEVVPVINKIDLPTADIERAKAEIEAVIGIDAADAVPVSAKTGLNVQDVLEAIVHRIPPPKPRDTDKLQALIIDSWFDNYLGVVSLVRVMQGEIKAGDKLQVMSTGRNHQVDNVGVFTPKRKVLPALRAGEVGWVTASIKDVHGAPVGDTLTLAADPAPKPLPGFQEMQPRVFAGLFPVDAEDYPDLREALDKLRLNDAALRFEPESSEAMGFGFRCGFLGMLHMEIVQERLEREYNLDLISTAPTVVYEVLKTDGTIINMDNPAKLPPVNHVEEIREPIIRANVLTPEEYIGNIIKLCEEKRGSQIGINYLGSQVQISYELPMAEVVLDFFDKLKSVSRGYASLDYHFVRFDAGPFVRVDVLINGDKVDALSLIVHRSHADRRGRELCDKMKDLIPRQQFDVAIQAAVGSQIIARTTVKAMRKNVLAKCYGGDVSRKKKLLEKQKEGKKRMKQVGRVEIPQEAFLAVLQMDNK</sequence>
<keyword id="KW-0997">Cell inner membrane</keyword>
<keyword id="KW-1003">Cell membrane</keyword>
<keyword id="KW-0342">GTP-binding</keyword>
<keyword id="KW-0378">Hydrolase</keyword>
<keyword id="KW-0472">Membrane</keyword>
<keyword id="KW-0547">Nucleotide-binding</keyword>
<keyword id="KW-0648">Protein biosynthesis</keyword>
<proteinExistence type="inferred from homology"/>
<evidence type="ECO:0000255" key="1">
    <source>
        <dbReference type="HAMAP-Rule" id="MF_00071"/>
    </source>
</evidence>
<protein>
    <recommendedName>
        <fullName evidence="1">Elongation factor 4</fullName>
        <shortName evidence="1">EF-4</shortName>
        <ecNumber evidence="1">3.6.5.n1</ecNumber>
    </recommendedName>
    <alternativeName>
        <fullName evidence="1">Ribosomal back-translocase LepA</fullName>
    </alternativeName>
</protein>
<dbReference type="EC" id="3.6.5.n1" evidence="1"/>
<dbReference type="EMBL" id="CP001111">
    <property type="protein sequence ID" value="ACF52677.1"/>
    <property type="molecule type" value="Genomic_DNA"/>
</dbReference>
<dbReference type="SMR" id="B4SRL3"/>
<dbReference type="STRING" id="391008.Smal_2978"/>
<dbReference type="KEGG" id="smt:Smal_2978"/>
<dbReference type="eggNOG" id="COG0481">
    <property type="taxonomic scope" value="Bacteria"/>
</dbReference>
<dbReference type="HOGENOM" id="CLU_009995_3_3_6"/>
<dbReference type="OrthoDB" id="9801472at2"/>
<dbReference type="Proteomes" id="UP000001867">
    <property type="component" value="Chromosome"/>
</dbReference>
<dbReference type="GO" id="GO:0005886">
    <property type="term" value="C:plasma membrane"/>
    <property type="evidence" value="ECO:0007669"/>
    <property type="project" value="UniProtKB-SubCell"/>
</dbReference>
<dbReference type="GO" id="GO:0005525">
    <property type="term" value="F:GTP binding"/>
    <property type="evidence" value="ECO:0007669"/>
    <property type="project" value="UniProtKB-UniRule"/>
</dbReference>
<dbReference type="GO" id="GO:0003924">
    <property type="term" value="F:GTPase activity"/>
    <property type="evidence" value="ECO:0007669"/>
    <property type="project" value="UniProtKB-UniRule"/>
</dbReference>
<dbReference type="GO" id="GO:0097216">
    <property type="term" value="F:guanosine tetraphosphate binding"/>
    <property type="evidence" value="ECO:0007669"/>
    <property type="project" value="UniProtKB-ARBA"/>
</dbReference>
<dbReference type="GO" id="GO:0043022">
    <property type="term" value="F:ribosome binding"/>
    <property type="evidence" value="ECO:0007669"/>
    <property type="project" value="UniProtKB-UniRule"/>
</dbReference>
<dbReference type="GO" id="GO:0003746">
    <property type="term" value="F:translation elongation factor activity"/>
    <property type="evidence" value="ECO:0007669"/>
    <property type="project" value="UniProtKB-UniRule"/>
</dbReference>
<dbReference type="GO" id="GO:0045727">
    <property type="term" value="P:positive regulation of translation"/>
    <property type="evidence" value="ECO:0007669"/>
    <property type="project" value="UniProtKB-UniRule"/>
</dbReference>
<dbReference type="CDD" id="cd03699">
    <property type="entry name" value="EF4_II"/>
    <property type="match status" value="1"/>
</dbReference>
<dbReference type="CDD" id="cd16260">
    <property type="entry name" value="EF4_III"/>
    <property type="match status" value="1"/>
</dbReference>
<dbReference type="CDD" id="cd01890">
    <property type="entry name" value="LepA"/>
    <property type="match status" value="1"/>
</dbReference>
<dbReference type="CDD" id="cd03709">
    <property type="entry name" value="lepA_C"/>
    <property type="match status" value="1"/>
</dbReference>
<dbReference type="FunFam" id="3.40.50.300:FF:000078">
    <property type="entry name" value="Elongation factor 4"/>
    <property type="match status" value="1"/>
</dbReference>
<dbReference type="FunFam" id="2.40.30.10:FF:000015">
    <property type="entry name" value="Translation factor GUF1, mitochondrial"/>
    <property type="match status" value="1"/>
</dbReference>
<dbReference type="FunFam" id="3.30.70.240:FF:000007">
    <property type="entry name" value="Translation factor GUF1, mitochondrial"/>
    <property type="match status" value="1"/>
</dbReference>
<dbReference type="FunFam" id="3.30.70.2570:FF:000001">
    <property type="entry name" value="Translation factor GUF1, mitochondrial"/>
    <property type="match status" value="1"/>
</dbReference>
<dbReference type="FunFam" id="3.30.70.870:FF:000004">
    <property type="entry name" value="Translation factor GUF1, mitochondrial"/>
    <property type="match status" value="1"/>
</dbReference>
<dbReference type="Gene3D" id="3.30.70.240">
    <property type="match status" value="1"/>
</dbReference>
<dbReference type="Gene3D" id="3.30.70.2570">
    <property type="entry name" value="Elongation factor 4, C-terminal domain"/>
    <property type="match status" value="1"/>
</dbReference>
<dbReference type="Gene3D" id="3.30.70.870">
    <property type="entry name" value="Elongation Factor G (Translational Gtpase), domain 3"/>
    <property type="match status" value="1"/>
</dbReference>
<dbReference type="Gene3D" id="3.40.50.300">
    <property type="entry name" value="P-loop containing nucleotide triphosphate hydrolases"/>
    <property type="match status" value="1"/>
</dbReference>
<dbReference type="Gene3D" id="2.40.30.10">
    <property type="entry name" value="Translation factors"/>
    <property type="match status" value="1"/>
</dbReference>
<dbReference type="HAMAP" id="MF_00071">
    <property type="entry name" value="LepA"/>
    <property type="match status" value="1"/>
</dbReference>
<dbReference type="InterPro" id="IPR006297">
    <property type="entry name" value="EF-4"/>
</dbReference>
<dbReference type="InterPro" id="IPR035647">
    <property type="entry name" value="EFG_III/V"/>
</dbReference>
<dbReference type="InterPro" id="IPR000640">
    <property type="entry name" value="EFG_V-like"/>
</dbReference>
<dbReference type="InterPro" id="IPR004161">
    <property type="entry name" value="EFTu-like_2"/>
</dbReference>
<dbReference type="InterPro" id="IPR031157">
    <property type="entry name" value="G_TR_CS"/>
</dbReference>
<dbReference type="InterPro" id="IPR038363">
    <property type="entry name" value="LepA_C_sf"/>
</dbReference>
<dbReference type="InterPro" id="IPR013842">
    <property type="entry name" value="LepA_CTD"/>
</dbReference>
<dbReference type="InterPro" id="IPR035654">
    <property type="entry name" value="LepA_IV"/>
</dbReference>
<dbReference type="InterPro" id="IPR027417">
    <property type="entry name" value="P-loop_NTPase"/>
</dbReference>
<dbReference type="InterPro" id="IPR005225">
    <property type="entry name" value="Small_GTP-bd"/>
</dbReference>
<dbReference type="InterPro" id="IPR000795">
    <property type="entry name" value="T_Tr_GTP-bd_dom"/>
</dbReference>
<dbReference type="NCBIfam" id="TIGR01393">
    <property type="entry name" value="lepA"/>
    <property type="match status" value="1"/>
</dbReference>
<dbReference type="NCBIfam" id="TIGR00231">
    <property type="entry name" value="small_GTP"/>
    <property type="match status" value="1"/>
</dbReference>
<dbReference type="PANTHER" id="PTHR43512:SF4">
    <property type="entry name" value="TRANSLATION FACTOR GUF1 HOMOLOG, CHLOROPLASTIC"/>
    <property type="match status" value="1"/>
</dbReference>
<dbReference type="PANTHER" id="PTHR43512">
    <property type="entry name" value="TRANSLATION FACTOR GUF1-RELATED"/>
    <property type="match status" value="1"/>
</dbReference>
<dbReference type="Pfam" id="PF00679">
    <property type="entry name" value="EFG_C"/>
    <property type="match status" value="1"/>
</dbReference>
<dbReference type="Pfam" id="PF00009">
    <property type="entry name" value="GTP_EFTU"/>
    <property type="match status" value="1"/>
</dbReference>
<dbReference type="Pfam" id="PF03144">
    <property type="entry name" value="GTP_EFTU_D2"/>
    <property type="match status" value="1"/>
</dbReference>
<dbReference type="Pfam" id="PF06421">
    <property type="entry name" value="LepA_C"/>
    <property type="match status" value="1"/>
</dbReference>
<dbReference type="PRINTS" id="PR00315">
    <property type="entry name" value="ELONGATNFCT"/>
</dbReference>
<dbReference type="SMART" id="SM00838">
    <property type="entry name" value="EFG_C"/>
    <property type="match status" value="1"/>
</dbReference>
<dbReference type="SUPFAM" id="SSF54980">
    <property type="entry name" value="EF-G C-terminal domain-like"/>
    <property type="match status" value="2"/>
</dbReference>
<dbReference type="SUPFAM" id="SSF52540">
    <property type="entry name" value="P-loop containing nucleoside triphosphate hydrolases"/>
    <property type="match status" value="1"/>
</dbReference>
<dbReference type="PROSITE" id="PS00301">
    <property type="entry name" value="G_TR_1"/>
    <property type="match status" value="1"/>
</dbReference>
<dbReference type="PROSITE" id="PS51722">
    <property type="entry name" value="G_TR_2"/>
    <property type="match status" value="1"/>
</dbReference>
<gene>
    <name evidence="1" type="primary">lepA</name>
    <name type="ordered locus">Smal_2978</name>
</gene>
<organism>
    <name type="scientific">Stenotrophomonas maltophilia (strain R551-3)</name>
    <dbReference type="NCBI Taxonomy" id="391008"/>
    <lineage>
        <taxon>Bacteria</taxon>
        <taxon>Pseudomonadati</taxon>
        <taxon>Pseudomonadota</taxon>
        <taxon>Gammaproteobacteria</taxon>
        <taxon>Lysobacterales</taxon>
        <taxon>Lysobacteraceae</taxon>
        <taxon>Stenotrophomonas</taxon>
        <taxon>Stenotrophomonas maltophilia group</taxon>
    </lineage>
</organism>
<feature type="chain" id="PRO_1000092450" description="Elongation factor 4">
    <location>
        <begin position="1"/>
        <end position="602"/>
    </location>
</feature>
<feature type="domain" description="tr-type G">
    <location>
        <begin position="7"/>
        <end position="189"/>
    </location>
</feature>
<feature type="binding site" evidence="1">
    <location>
        <begin position="19"/>
        <end position="24"/>
    </location>
    <ligand>
        <name>GTP</name>
        <dbReference type="ChEBI" id="CHEBI:37565"/>
    </ligand>
</feature>
<feature type="binding site" evidence="1">
    <location>
        <begin position="136"/>
        <end position="139"/>
    </location>
    <ligand>
        <name>GTP</name>
        <dbReference type="ChEBI" id="CHEBI:37565"/>
    </ligand>
</feature>
<name>LEPA_STRM5</name>
<reference key="1">
    <citation type="submission" date="2008-06" db="EMBL/GenBank/DDBJ databases">
        <title>Complete sequence of Stenotrophomonas maltophilia R551-3.</title>
        <authorList>
            <consortium name="US DOE Joint Genome Institute"/>
            <person name="Lucas S."/>
            <person name="Copeland A."/>
            <person name="Lapidus A."/>
            <person name="Glavina del Rio T."/>
            <person name="Dalin E."/>
            <person name="Tice H."/>
            <person name="Pitluck S."/>
            <person name="Chain P."/>
            <person name="Malfatti S."/>
            <person name="Shin M."/>
            <person name="Vergez L."/>
            <person name="Lang D."/>
            <person name="Schmutz J."/>
            <person name="Larimer F."/>
            <person name="Land M."/>
            <person name="Hauser L."/>
            <person name="Kyrpides N."/>
            <person name="Mikhailova N."/>
            <person name="Taghavi S."/>
            <person name="Monchy S."/>
            <person name="Newman L."/>
            <person name="Vangronsveld J."/>
            <person name="van der Lelie D."/>
            <person name="Richardson P."/>
        </authorList>
    </citation>
    <scope>NUCLEOTIDE SEQUENCE [LARGE SCALE GENOMIC DNA]</scope>
    <source>
        <strain>R551-3</strain>
    </source>
</reference>